<proteinExistence type="inferred from homology"/>
<accession>Q288H5</accession>
<sequence>MTNIRKTHPLIKIVNHSFIDLPTPSNISAWWNFGSLLGLCLIIQILTGLFLAMHYTSDTMTAFSSVTHICRDVNYGWLIRYIHANGASMFFICLYLHVGRGLYYGSYTYFETWNIGVILLFTIMATAFMGYVLPWGQMSFWGATVITNLLSAIPYIGTDLVEWIWGGFSVDKATLTRFFAFHFILPFIVTALVMVHLLFLHETGSNNPSGLISDSDKVPFHPYFTIKDILGALLLTLSLFLLVLFSPDLLGDPDNYTPANPLNTPPHIKPEWYFLFAYAILRSIPNKLGGVLALVFSILILMLFPILHMSKQRGMMFRPLSQCLFWILAADLFTLTWIGGQPVEHPFIIIGQTASILYFTIILIILPLVSMLENKLLKW</sequence>
<keyword id="KW-0249">Electron transport</keyword>
<keyword id="KW-0349">Heme</keyword>
<keyword id="KW-0408">Iron</keyword>
<keyword id="KW-0472">Membrane</keyword>
<keyword id="KW-0479">Metal-binding</keyword>
<keyword id="KW-0496">Mitochondrion</keyword>
<keyword id="KW-0999">Mitochondrion inner membrane</keyword>
<keyword id="KW-0679">Respiratory chain</keyword>
<keyword id="KW-0812">Transmembrane</keyword>
<keyword id="KW-1133">Transmembrane helix</keyword>
<keyword id="KW-0813">Transport</keyword>
<keyword id="KW-0830">Ubiquinone</keyword>
<comment type="function">
    <text evidence="2">Component of the ubiquinol-cytochrome c reductase complex (complex III or cytochrome b-c1 complex) that is part of the mitochondrial respiratory chain. The b-c1 complex mediates electron transfer from ubiquinol to cytochrome c. Contributes to the generation of a proton gradient across the mitochondrial membrane that is then used for ATP synthesis.</text>
</comment>
<comment type="cofactor">
    <cofactor evidence="2">
        <name>heme b</name>
        <dbReference type="ChEBI" id="CHEBI:60344"/>
    </cofactor>
    <text evidence="2">Binds 2 heme b groups non-covalently.</text>
</comment>
<comment type="subunit">
    <text evidence="2">The cytochrome bc1 complex contains 11 subunits: 3 respiratory subunits (MT-CYB, CYC1 and UQCRFS1), 2 core proteins (UQCRC1 and UQCRC2) and 6 low-molecular weight proteins (UQCRH/QCR6, UQCRB/QCR7, UQCRQ/QCR8, UQCR10/QCR9, UQCR11/QCR10 and a cleavage product of UQCRFS1). This cytochrome bc1 complex then forms a dimer.</text>
</comment>
<comment type="subcellular location">
    <subcellularLocation>
        <location evidence="2">Mitochondrion inner membrane</location>
        <topology evidence="2">Multi-pass membrane protein</topology>
    </subcellularLocation>
</comment>
<comment type="miscellaneous">
    <text evidence="1">Heme 1 (or BL or b562) is low-potential and absorbs at about 562 nm, and heme 2 (or BH or b566) is high-potential and absorbs at about 566 nm.</text>
</comment>
<comment type="similarity">
    <text evidence="3 4">Belongs to the cytochrome b family.</text>
</comment>
<comment type="caution">
    <text evidence="2">The full-length protein contains only eight transmembrane helices, not nine as predicted by bioinformatics tools.</text>
</comment>
<reference key="1">
    <citation type="journal article" date="2006" name="Mol. Phylogenet. Evol.">
        <title>Phylogeny and biogeography of the Petaurista philippensis complex (Rodentia: Sciuridae), inter- and intraspecific relationships inferred from molecular and morphometric analysis.</title>
        <authorList>
            <person name="Yu F."/>
            <person name="Yu F."/>
            <person name="Pang J."/>
            <person name="Kilpatrick C.W."/>
            <person name="McGuire P.M."/>
            <person name="Wang Y."/>
            <person name="Lu S."/>
            <person name="Woods C.A."/>
        </authorList>
    </citation>
    <scope>NUCLEOTIDE SEQUENCE [GENOMIC DNA]</scope>
    <source>
        <strain>Isolate 1</strain>
        <tissue>Skin</tissue>
    </source>
</reference>
<dbReference type="EMBL" id="DQ072107">
    <property type="protein sequence ID" value="AAZ23214.1"/>
    <property type="molecule type" value="Genomic_DNA"/>
</dbReference>
<dbReference type="SMR" id="Q288H5"/>
<dbReference type="GO" id="GO:0005743">
    <property type="term" value="C:mitochondrial inner membrane"/>
    <property type="evidence" value="ECO:0007669"/>
    <property type="project" value="UniProtKB-SubCell"/>
</dbReference>
<dbReference type="GO" id="GO:0045275">
    <property type="term" value="C:respiratory chain complex III"/>
    <property type="evidence" value="ECO:0007669"/>
    <property type="project" value="InterPro"/>
</dbReference>
<dbReference type="GO" id="GO:0046872">
    <property type="term" value="F:metal ion binding"/>
    <property type="evidence" value="ECO:0007669"/>
    <property type="project" value="UniProtKB-KW"/>
</dbReference>
<dbReference type="GO" id="GO:0008121">
    <property type="term" value="F:ubiquinol-cytochrome-c reductase activity"/>
    <property type="evidence" value="ECO:0007669"/>
    <property type="project" value="InterPro"/>
</dbReference>
<dbReference type="GO" id="GO:0006122">
    <property type="term" value="P:mitochondrial electron transport, ubiquinol to cytochrome c"/>
    <property type="evidence" value="ECO:0007669"/>
    <property type="project" value="TreeGrafter"/>
</dbReference>
<dbReference type="CDD" id="cd00290">
    <property type="entry name" value="cytochrome_b_C"/>
    <property type="match status" value="1"/>
</dbReference>
<dbReference type="CDD" id="cd00284">
    <property type="entry name" value="Cytochrome_b_N"/>
    <property type="match status" value="1"/>
</dbReference>
<dbReference type="FunFam" id="1.20.810.10:FF:000002">
    <property type="entry name" value="Cytochrome b"/>
    <property type="match status" value="1"/>
</dbReference>
<dbReference type="Gene3D" id="1.20.810.10">
    <property type="entry name" value="Cytochrome Bc1 Complex, Chain C"/>
    <property type="match status" value="1"/>
</dbReference>
<dbReference type="InterPro" id="IPR005798">
    <property type="entry name" value="Cyt_b/b6_C"/>
</dbReference>
<dbReference type="InterPro" id="IPR036150">
    <property type="entry name" value="Cyt_b/b6_C_sf"/>
</dbReference>
<dbReference type="InterPro" id="IPR005797">
    <property type="entry name" value="Cyt_b/b6_N"/>
</dbReference>
<dbReference type="InterPro" id="IPR027387">
    <property type="entry name" value="Cytb/b6-like_sf"/>
</dbReference>
<dbReference type="InterPro" id="IPR030689">
    <property type="entry name" value="Cytochrome_b"/>
</dbReference>
<dbReference type="InterPro" id="IPR048260">
    <property type="entry name" value="Cytochrome_b_C_euk/bac"/>
</dbReference>
<dbReference type="InterPro" id="IPR048259">
    <property type="entry name" value="Cytochrome_b_N_euk/bac"/>
</dbReference>
<dbReference type="InterPro" id="IPR016174">
    <property type="entry name" value="Di-haem_cyt_TM"/>
</dbReference>
<dbReference type="PANTHER" id="PTHR19271">
    <property type="entry name" value="CYTOCHROME B"/>
    <property type="match status" value="1"/>
</dbReference>
<dbReference type="PANTHER" id="PTHR19271:SF16">
    <property type="entry name" value="CYTOCHROME B"/>
    <property type="match status" value="1"/>
</dbReference>
<dbReference type="Pfam" id="PF00032">
    <property type="entry name" value="Cytochrom_B_C"/>
    <property type="match status" value="1"/>
</dbReference>
<dbReference type="Pfam" id="PF00033">
    <property type="entry name" value="Cytochrome_B"/>
    <property type="match status" value="1"/>
</dbReference>
<dbReference type="PIRSF" id="PIRSF038885">
    <property type="entry name" value="COB"/>
    <property type="match status" value="1"/>
</dbReference>
<dbReference type="SUPFAM" id="SSF81648">
    <property type="entry name" value="a domain/subunit of cytochrome bc1 complex (Ubiquinol-cytochrome c reductase)"/>
    <property type="match status" value="1"/>
</dbReference>
<dbReference type="SUPFAM" id="SSF81342">
    <property type="entry name" value="Transmembrane di-heme cytochromes"/>
    <property type="match status" value="1"/>
</dbReference>
<dbReference type="PROSITE" id="PS51003">
    <property type="entry name" value="CYTB_CTER"/>
    <property type="match status" value="1"/>
</dbReference>
<dbReference type="PROSITE" id="PS51002">
    <property type="entry name" value="CYTB_NTER"/>
    <property type="match status" value="1"/>
</dbReference>
<name>CYB_PETPH</name>
<evidence type="ECO:0000250" key="1"/>
<evidence type="ECO:0000250" key="2">
    <source>
        <dbReference type="UniProtKB" id="P00157"/>
    </source>
</evidence>
<evidence type="ECO:0000255" key="3">
    <source>
        <dbReference type="PROSITE-ProRule" id="PRU00967"/>
    </source>
</evidence>
<evidence type="ECO:0000255" key="4">
    <source>
        <dbReference type="PROSITE-ProRule" id="PRU00968"/>
    </source>
</evidence>
<geneLocation type="mitochondrion"/>
<protein>
    <recommendedName>
        <fullName>Cytochrome b</fullName>
    </recommendedName>
    <alternativeName>
        <fullName>Complex III subunit 3</fullName>
    </alternativeName>
    <alternativeName>
        <fullName>Complex III subunit III</fullName>
    </alternativeName>
    <alternativeName>
        <fullName>Cytochrome b-c1 complex subunit 3</fullName>
    </alternativeName>
    <alternativeName>
        <fullName>Ubiquinol-cytochrome-c reductase complex cytochrome b subunit</fullName>
    </alternativeName>
</protein>
<organism>
    <name type="scientific">Petaurista philippensis</name>
    <name type="common">Indian giant flying squirrel</name>
    <dbReference type="NCBI Taxonomy" id="89095"/>
    <lineage>
        <taxon>Eukaryota</taxon>
        <taxon>Metazoa</taxon>
        <taxon>Chordata</taxon>
        <taxon>Craniata</taxon>
        <taxon>Vertebrata</taxon>
        <taxon>Euteleostomi</taxon>
        <taxon>Mammalia</taxon>
        <taxon>Eutheria</taxon>
        <taxon>Euarchontoglires</taxon>
        <taxon>Glires</taxon>
        <taxon>Rodentia</taxon>
        <taxon>Sciuromorpha</taxon>
        <taxon>Sciuridae</taxon>
        <taxon>Sciurinae</taxon>
        <taxon>Pteromyini</taxon>
        <taxon>Petaurista</taxon>
    </lineage>
</organism>
<gene>
    <name type="primary">MT-CYB</name>
    <name type="synonym">COB</name>
    <name type="synonym">CYTB</name>
    <name type="synonym">MTCYB</name>
</gene>
<feature type="chain" id="PRO_0000255117" description="Cytochrome b">
    <location>
        <begin position="1"/>
        <end position="379"/>
    </location>
</feature>
<feature type="transmembrane region" description="Helical" evidence="2">
    <location>
        <begin position="33"/>
        <end position="53"/>
    </location>
</feature>
<feature type="transmembrane region" description="Helical" evidence="2">
    <location>
        <begin position="77"/>
        <end position="98"/>
    </location>
</feature>
<feature type="transmembrane region" description="Helical" evidence="2">
    <location>
        <begin position="113"/>
        <end position="133"/>
    </location>
</feature>
<feature type="transmembrane region" description="Helical" evidence="2">
    <location>
        <begin position="178"/>
        <end position="198"/>
    </location>
</feature>
<feature type="transmembrane region" description="Helical" evidence="2">
    <location>
        <begin position="226"/>
        <end position="246"/>
    </location>
</feature>
<feature type="transmembrane region" description="Helical" evidence="2">
    <location>
        <begin position="288"/>
        <end position="308"/>
    </location>
</feature>
<feature type="transmembrane region" description="Helical" evidence="2">
    <location>
        <begin position="320"/>
        <end position="340"/>
    </location>
</feature>
<feature type="transmembrane region" description="Helical" evidence="2">
    <location>
        <begin position="347"/>
        <end position="367"/>
    </location>
</feature>
<feature type="binding site" description="axial binding residue" evidence="2">
    <location>
        <position position="83"/>
    </location>
    <ligand>
        <name>heme b</name>
        <dbReference type="ChEBI" id="CHEBI:60344"/>
        <label>b562</label>
    </ligand>
    <ligandPart>
        <name>Fe</name>
        <dbReference type="ChEBI" id="CHEBI:18248"/>
    </ligandPart>
</feature>
<feature type="binding site" description="axial binding residue" evidence="2">
    <location>
        <position position="97"/>
    </location>
    <ligand>
        <name>heme b</name>
        <dbReference type="ChEBI" id="CHEBI:60344"/>
        <label>b566</label>
    </ligand>
    <ligandPart>
        <name>Fe</name>
        <dbReference type="ChEBI" id="CHEBI:18248"/>
    </ligandPart>
</feature>
<feature type="binding site" description="axial binding residue" evidence="2">
    <location>
        <position position="182"/>
    </location>
    <ligand>
        <name>heme b</name>
        <dbReference type="ChEBI" id="CHEBI:60344"/>
        <label>b562</label>
    </ligand>
    <ligandPart>
        <name>Fe</name>
        <dbReference type="ChEBI" id="CHEBI:18248"/>
    </ligandPart>
</feature>
<feature type="binding site" description="axial binding residue" evidence="2">
    <location>
        <position position="196"/>
    </location>
    <ligand>
        <name>heme b</name>
        <dbReference type="ChEBI" id="CHEBI:60344"/>
        <label>b566</label>
    </ligand>
    <ligandPart>
        <name>Fe</name>
        <dbReference type="ChEBI" id="CHEBI:18248"/>
    </ligandPart>
</feature>
<feature type="binding site" evidence="2">
    <location>
        <position position="201"/>
    </location>
    <ligand>
        <name>a ubiquinone</name>
        <dbReference type="ChEBI" id="CHEBI:16389"/>
    </ligand>
</feature>